<name>NADD_ECO5E</name>
<evidence type="ECO:0000255" key="1">
    <source>
        <dbReference type="HAMAP-Rule" id="MF_00244"/>
    </source>
</evidence>
<sequence>MKSLQALFGGTFDPVHYGHLKPVETLANLIGLTRVTIIPNNVPPHRPQPEANSVQRKHMLELAIADKPLFTLDERELKRNAPSYTAQTLKEWRQEQGPDVPLAFIIGQDSLLTFPTWYEYETILDNAHLIVCRRPGYPLEMAQPQYQQWLEDHLTHNPEDLHLQPAGKIYLAETPWFNISATIIRERLQNGESCDDLLPEPVLTYINQQGLYR</sequence>
<organism>
    <name type="scientific">Escherichia coli O157:H7 (strain EC4115 / EHEC)</name>
    <dbReference type="NCBI Taxonomy" id="444450"/>
    <lineage>
        <taxon>Bacteria</taxon>
        <taxon>Pseudomonadati</taxon>
        <taxon>Pseudomonadota</taxon>
        <taxon>Gammaproteobacteria</taxon>
        <taxon>Enterobacterales</taxon>
        <taxon>Enterobacteriaceae</taxon>
        <taxon>Escherichia</taxon>
    </lineage>
</organism>
<comment type="function">
    <text evidence="1">Catalyzes the reversible adenylation of nicotinate mononucleotide (NaMN) to nicotinic acid adenine dinucleotide (NaAD).</text>
</comment>
<comment type="catalytic activity">
    <reaction evidence="1">
        <text>nicotinate beta-D-ribonucleotide + ATP + H(+) = deamido-NAD(+) + diphosphate</text>
        <dbReference type="Rhea" id="RHEA:22860"/>
        <dbReference type="ChEBI" id="CHEBI:15378"/>
        <dbReference type="ChEBI" id="CHEBI:30616"/>
        <dbReference type="ChEBI" id="CHEBI:33019"/>
        <dbReference type="ChEBI" id="CHEBI:57502"/>
        <dbReference type="ChEBI" id="CHEBI:58437"/>
        <dbReference type="EC" id="2.7.7.18"/>
    </reaction>
</comment>
<comment type="pathway">
    <text evidence="1">Cofactor biosynthesis; NAD(+) biosynthesis; deamido-NAD(+) from nicotinate D-ribonucleotide: step 1/1.</text>
</comment>
<comment type="similarity">
    <text evidence="1">Belongs to the NadD family.</text>
</comment>
<dbReference type="EC" id="2.7.7.18" evidence="1"/>
<dbReference type="EMBL" id="CP001164">
    <property type="protein sequence ID" value="ACI37174.1"/>
    <property type="molecule type" value="Genomic_DNA"/>
</dbReference>
<dbReference type="RefSeq" id="WP_000838887.1">
    <property type="nucleotide sequence ID" value="NC_011353.1"/>
</dbReference>
<dbReference type="SMR" id="B5YQJ1"/>
<dbReference type="KEGG" id="ecf:ECH74115_0728"/>
<dbReference type="HOGENOM" id="CLU_069765_0_0_6"/>
<dbReference type="UniPathway" id="UPA00253">
    <property type="reaction ID" value="UER00332"/>
</dbReference>
<dbReference type="GO" id="GO:0005524">
    <property type="term" value="F:ATP binding"/>
    <property type="evidence" value="ECO:0007669"/>
    <property type="project" value="UniProtKB-KW"/>
</dbReference>
<dbReference type="GO" id="GO:0004515">
    <property type="term" value="F:nicotinate-nucleotide adenylyltransferase activity"/>
    <property type="evidence" value="ECO:0007669"/>
    <property type="project" value="UniProtKB-UniRule"/>
</dbReference>
<dbReference type="GO" id="GO:0009435">
    <property type="term" value="P:NAD biosynthetic process"/>
    <property type="evidence" value="ECO:0007669"/>
    <property type="project" value="UniProtKB-UniRule"/>
</dbReference>
<dbReference type="CDD" id="cd02165">
    <property type="entry name" value="NMNAT"/>
    <property type="match status" value="1"/>
</dbReference>
<dbReference type="FunFam" id="3.40.50.620:FF:000039">
    <property type="entry name" value="Probable nicotinate-nucleotide adenylyltransferase"/>
    <property type="match status" value="1"/>
</dbReference>
<dbReference type="Gene3D" id="3.40.50.620">
    <property type="entry name" value="HUPs"/>
    <property type="match status" value="1"/>
</dbReference>
<dbReference type="HAMAP" id="MF_00244">
    <property type="entry name" value="NaMN_adenylyltr"/>
    <property type="match status" value="1"/>
</dbReference>
<dbReference type="InterPro" id="IPR004821">
    <property type="entry name" value="Cyt_trans-like"/>
</dbReference>
<dbReference type="InterPro" id="IPR005248">
    <property type="entry name" value="NadD/NMNAT"/>
</dbReference>
<dbReference type="InterPro" id="IPR014729">
    <property type="entry name" value="Rossmann-like_a/b/a_fold"/>
</dbReference>
<dbReference type="NCBIfam" id="TIGR00125">
    <property type="entry name" value="cyt_tran_rel"/>
    <property type="match status" value="1"/>
</dbReference>
<dbReference type="NCBIfam" id="TIGR00482">
    <property type="entry name" value="nicotinate (nicotinamide) nucleotide adenylyltransferase"/>
    <property type="match status" value="1"/>
</dbReference>
<dbReference type="NCBIfam" id="NF000839">
    <property type="entry name" value="PRK00071.1-1"/>
    <property type="match status" value="1"/>
</dbReference>
<dbReference type="NCBIfam" id="NF000840">
    <property type="entry name" value="PRK00071.1-3"/>
    <property type="match status" value="1"/>
</dbReference>
<dbReference type="PANTHER" id="PTHR39321">
    <property type="entry name" value="NICOTINATE-NUCLEOTIDE ADENYLYLTRANSFERASE-RELATED"/>
    <property type="match status" value="1"/>
</dbReference>
<dbReference type="PANTHER" id="PTHR39321:SF3">
    <property type="entry name" value="PHOSPHOPANTETHEINE ADENYLYLTRANSFERASE"/>
    <property type="match status" value="1"/>
</dbReference>
<dbReference type="Pfam" id="PF01467">
    <property type="entry name" value="CTP_transf_like"/>
    <property type="match status" value="1"/>
</dbReference>
<dbReference type="SUPFAM" id="SSF52374">
    <property type="entry name" value="Nucleotidylyl transferase"/>
    <property type="match status" value="1"/>
</dbReference>
<accession>B5YQJ1</accession>
<gene>
    <name evidence="1" type="primary">nadD</name>
    <name type="ordered locus">ECH74115_0728</name>
</gene>
<protein>
    <recommendedName>
        <fullName evidence="1">Probable nicotinate-nucleotide adenylyltransferase</fullName>
        <ecNumber evidence="1">2.7.7.18</ecNumber>
    </recommendedName>
    <alternativeName>
        <fullName evidence="1">Deamido-NAD(+) diphosphorylase</fullName>
    </alternativeName>
    <alternativeName>
        <fullName evidence="1">Deamido-NAD(+) pyrophosphorylase</fullName>
    </alternativeName>
    <alternativeName>
        <fullName evidence="1">Nicotinate mononucleotide adenylyltransferase</fullName>
        <shortName evidence="1">NaMN adenylyltransferase</shortName>
    </alternativeName>
</protein>
<reference key="1">
    <citation type="journal article" date="2011" name="Proc. Natl. Acad. Sci. U.S.A.">
        <title>Genomic anatomy of Escherichia coli O157:H7 outbreaks.</title>
        <authorList>
            <person name="Eppinger M."/>
            <person name="Mammel M.K."/>
            <person name="Leclerc J.E."/>
            <person name="Ravel J."/>
            <person name="Cebula T.A."/>
        </authorList>
    </citation>
    <scope>NUCLEOTIDE SEQUENCE [LARGE SCALE GENOMIC DNA]</scope>
    <source>
        <strain>EC4115 / EHEC</strain>
    </source>
</reference>
<keyword id="KW-0067">ATP-binding</keyword>
<keyword id="KW-0520">NAD</keyword>
<keyword id="KW-0547">Nucleotide-binding</keyword>
<keyword id="KW-0548">Nucleotidyltransferase</keyword>
<keyword id="KW-0662">Pyridine nucleotide biosynthesis</keyword>
<keyword id="KW-0808">Transferase</keyword>
<proteinExistence type="inferred from homology"/>
<feature type="chain" id="PRO_1000100774" description="Probable nicotinate-nucleotide adenylyltransferase">
    <location>
        <begin position="1"/>
        <end position="213"/>
    </location>
</feature>